<reference key="1">
    <citation type="journal article" date="2002" name="Nature">
        <title>Complete genome sequence of the model actinomycete Streptomyces coelicolor A3(2).</title>
        <authorList>
            <person name="Bentley S.D."/>
            <person name="Chater K.F."/>
            <person name="Cerdeno-Tarraga A.-M."/>
            <person name="Challis G.L."/>
            <person name="Thomson N.R."/>
            <person name="James K.D."/>
            <person name="Harris D.E."/>
            <person name="Quail M.A."/>
            <person name="Kieser H."/>
            <person name="Harper D."/>
            <person name="Bateman A."/>
            <person name="Brown S."/>
            <person name="Chandra G."/>
            <person name="Chen C.W."/>
            <person name="Collins M."/>
            <person name="Cronin A."/>
            <person name="Fraser A."/>
            <person name="Goble A."/>
            <person name="Hidalgo J."/>
            <person name="Hornsby T."/>
            <person name="Howarth S."/>
            <person name="Huang C.-H."/>
            <person name="Kieser T."/>
            <person name="Larke L."/>
            <person name="Murphy L.D."/>
            <person name="Oliver K."/>
            <person name="O'Neil S."/>
            <person name="Rabbinowitsch E."/>
            <person name="Rajandream M.A."/>
            <person name="Rutherford K.M."/>
            <person name="Rutter S."/>
            <person name="Seeger K."/>
            <person name="Saunders D."/>
            <person name="Sharp S."/>
            <person name="Squares R."/>
            <person name="Squares S."/>
            <person name="Taylor K."/>
            <person name="Warren T."/>
            <person name="Wietzorrek A."/>
            <person name="Woodward J.R."/>
            <person name="Barrell B.G."/>
            <person name="Parkhill J."/>
            <person name="Hopwood D.A."/>
        </authorList>
    </citation>
    <scope>NUCLEOTIDE SEQUENCE [LARGE SCALE GENOMIC DNA]</scope>
    <source>
        <strain>ATCC BAA-471 / A3(2) / M145</strain>
    </source>
</reference>
<keyword id="KW-0066">ATP synthesis</keyword>
<keyword id="KW-1003">Cell membrane</keyword>
<keyword id="KW-0139">CF(1)</keyword>
<keyword id="KW-0375">Hydrogen ion transport</keyword>
<keyword id="KW-0406">Ion transport</keyword>
<keyword id="KW-0472">Membrane</keyword>
<keyword id="KW-1185">Reference proteome</keyword>
<keyword id="KW-0813">Transport</keyword>
<name>ATPG_STRCO</name>
<protein>
    <recommendedName>
        <fullName evidence="1">ATP synthase gamma chain</fullName>
    </recommendedName>
    <alternativeName>
        <fullName evidence="1">ATP synthase F1 sector gamma subunit</fullName>
    </alternativeName>
    <alternativeName>
        <fullName evidence="1">F-ATPase gamma subunit</fullName>
    </alternativeName>
</protein>
<comment type="function">
    <text evidence="1">Produces ATP from ADP in the presence of a proton gradient across the membrane. The gamma chain is believed to be important in regulating ATPase activity and the flow of protons through the CF(0) complex.</text>
</comment>
<comment type="subunit">
    <text evidence="1">F-type ATPases have 2 components, CF(1) - the catalytic core - and CF(0) - the membrane proton channel. CF(1) has five subunits: alpha(3), beta(3), gamma(1), delta(1), epsilon(1). CF(0) has three main subunits: a, b and c.</text>
</comment>
<comment type="subcellular location">
    <subcellularLocation>
        <location evidence="1">Cell membrane</location>
        <topology evidence="1">Peripheral membrane protein</topology>
    </subcellularLocation>
</comment>
<comment type="similarity">
    <text evidence="1">Belongs to the ATPase gamma chain family.</text>
</comment>
<proteinExistence type="inferred from homology"/>
<sequence length="305" mass="32989">MGAQLRVYKRRIRSVTATKKITKAMEMIAASRVVKAQRKVAASTPYARELTRAVTAVGTGSNTKHPLTTEADSPSRAAVLLLTSDRGLAGAFNSNSIKAAEQLTERLEREGRQVDTYIVGRRGLAHYNFRERKVVESFAGFTDEPTYADAKKVAAPLIEAIEKDTAEGGVDELHIVYTEFVSMMTQTAVDSRLLPLSLDEVAEESGAKDEILPLYDFEPSAEDVLDALLPRYVESRIYNALLQSAASKHAATRRAMKSATDNAGELINTLSRLANAARQAEITQEISEIVGGASALADANAGSDN</sequence>
<organism>
    <name type="scientific">Streptomyces coelicolor (strain ATCC BAA-471 / A3(2) / M145)</name>
    <dbReference type="NCBI Taxonomy" id="100226"/>
    <lineage>
        <taxon>Bacteria</taxon>
        <taxon>Bacillati</taxon>
        <taxon>Actinomycetota</taxon>
        <taxon>Actinomycetes</taxon>
        <taxon>Kitasatosporales</taxon>
        <taxon>Streptomycetaceae</taxon>
        <taxon>Streptomyces</taxon>
        <taxon>Streptomyces albidoflavus group</taxon>
    </lineage>
</organism>
<dbReference type="EMBL" id="AL939123">
    <property type="protein sequence ID" value="CAB94543.1"/>
    <property type="molecule type" value="Genomic_DNA"/>
</dbReference>
<dbReference type="RefSeq" id="NP_629511.1">
    <property type="nucleotide sequence ID" value="NC_003888.3"/>
</dbReference>
<dbReference type="RefSeq" id="WP_003973625.1">
    <property type="nucleotide sequence ID" value="NZ_VNID01000011.1"/>
</dbReference>
<dbReference type="SMR" id="Q9K4D4"/>
<dbReference type="FunCoup" id="Q9K4D4">
    <property type="interactions" value="441"/>
</dbReference>
<dbReference type="STRING" id="100226.gene:17763024"/>
<dbReference type="PaxDb" id="100226-SCO5372"/>
<dbReference type="KEGG" id="sco:SCO5372"/>
<dbReference type="PATRIC" id="fig|100226.15.peg.5452"/>
<dbReference type="eggNOG" id="COG0224">
    <property type="taxonomic scope" value="Bacteria"/>
</dbReference>
<dbReference type="HOGENOM" id="CLU_050669_0_0_11"/>
<dbReference type="InParanoid" id="Q9K4D4"/>
<dbReference type="OrthoDB" id="9812769at2"/>
<dbReference type="PhylomeDB" id="Q9K4D4"/>
<dbReference type="Proteomes" id="UP000001973">
    <property type="component" value="Chromosome"/>
</dbReference>
<dbReference type="GO" id="GO:0005886">
    <property type="term" value="C:plasma membrane"/>
    <property type="evidence" value="ECO:0007669"/>
    <property type="project" value="UniProtKB-SubCell"/>
</dbReference>
<dbReference type="GO" id="GO:0045259">
    <property type="term" value="C:proton-transporting ATP synthase complex"/>
    <property type="evidence" value="ECO:0007669"/>
    <property type="project" value="UniProtKB-KW"/>
</dbReference>
<dbReference type="GO" id="GO:0005524">
    <property type="term" value="F:ATP binding"/>
    <property type="evidence" value="ECO:0007669"/>
    <property type="project" value="UniProtKB-UniRule"/>
</dbReference>
<dbReference type="GO" id="GO:0046933">
    <property type="term" value="F:proton-transporting ATP synthase activity, rotational mechanism"/>
    <property type="evidence" value="ECO:0007669"/>
    <property type="project" value="UniProtKB-UniRule"/>
</dbReference>
<dbReference type="GO" id="GO:0015986">
    <property type="term" value="P:proton motive force-driven ATP synthesis"/>
    <property type="evidence" value="ECO:0000318"/>
    <property type="project" value="GO_Central"/>
</dbReference>
<dbReference type="GO" id="GO:0042777">
    <property type="term" value="P:proton motive force-driven plasma membrane ATP synthesis"/>
    <property type="evidence" value="ECO:0007669"/>
    <property type="project" value="UniProtKB-UniRule"/>
</dbReference>
<dbReference type="CDD" id="cd12151">
    <property type="entry name" value="F1-ATPase_gamma"/>
    <property type="match status" value="1"/>
</dbReference>
<dbReference type="FunFam" id="1.10.287.80:FF:000010">
    <property type="entry name" value="ATP synthase gamma chain"/>
    <property type="match status" value="1"/>
</dbReference>
<dbReference type="FunFam" id="3.40.1380.10:FF:000014">
    <property type="entry name" value="ATP synthase gamma chain"/>
    <property type="match status" value="1"/>
</dbReference>
<dbReference type="Gene3D" id="3.40.1380.10">
    <property type="match status" value="1"/>
</dbReference>
<dbReference type="Gene3D" id="1.10.287.80">
    <property type="entry name" value="ATP synthase, gamma subunit, helix hairpin domain"/>
    <property type="match status" value="2"/>
</dbReference>
<dbReference type="HAMAP" id="MF_00815">
    <property type="entry name" value="ATP_synth_gamma_bact"/>
    <property type="match status" value="1"/>
</dbReference>
<dbReference type="InterPro" id="IPR035968">
    <property type="entry name" value="ATP_synth_F1_ATPase_gsu"/>
</dbReference>
<dbReference type="InterPro" id="IPR000131">
    <property type="entry name" value="ATP_synth_F1_gsu"/>
</dbReference>
<dbReference type="InterPro" id="IPR023632">
    <property type="entry name" value="ATP_synth_F1_gsu_CS"/>
</dbReference>
<dbReference type="NCBIfam" id="TIGR01146">
    <property type="entry name" value="ATPsyn_F1gamma"/>
    <property type="match status" value="1"/>
</dbReference>
<dbReference type="NCBIfam" id="NF004145">
    <property type="entry name" value="PRK05621.1-2"/>
    <property type="match status" value="1"/>
</dbReference>
<dbReference type="PANTHER" id="PTHR11693">
    <property type="entry name" value="ATP SYNTHASE GAMMA CHAIN"/>
    <property type="match status" value="1"/>
</dbReference>
<dbReference type="PANTHER" id="PTHR11693:SF22">
    <property type="entry name" value="ATP SYNTHASE SUBUNIT GAMMA, MITOCHONDRIAL"/>
    <property type="match status" value="1"/>
</dbReference>
<dbReference type="Pfam" id="PF00231">
    <property type="entry name" value="ATP-synt"/>
    <property type="match status" value="1"/>
</dbReference>
<dbReference type="PRINTS" id="PR00126">
    <property type="entry name" value="ATPASEGAMMA"/>
</dbReference>
<dbReference type="SUPFAM" id="SSF52943">
    <property type="entry name" value="ATP synthase (F1-ATPase), gamma subunit"/>
    <property type="match status" value="1"/>
</dbReference>
<dbReference type="PROSITE" id="PS00153">
    <property type="entry name" value="ATPASE_GAMMA"/>
    <property type="match status" value="1"/>
</dbReference>
<feature type="chain" id="PRO_0000073399" description="ATP synthase gamma chain">
    <location>
        <begin position="1"/>
        <end position="305"/>
    </location>
</feature>
<evidence type="ECO:0000255" key="1">
    <source>
        <dbReference type="HAMAP-Rule" id="MF_00815"/>
    </source>
</evidence>
<gene>
    <name evidence="1" type="primary">atpG</name>
    <name type="ordered locus">SCO5372</name>
    <name type="ORF">2SC6G5.16</name>
</gene>
<accession>Q9K4D4</accession>